<protein>
    <recommendedName>
        <fullName>Guanylate-binding protein 4</fullName>
        <ecNumber evidence="2">3.6.5.-</ecNumber>
    </recommendedName>
    <alternativeName>
        <fullName evidence="9">GTP-binding protein 4</fullName>
        <shortName evidence="9">GBP-4</shortName>
    </alternativeName>
    <alternativeName>
        <fullName>Guanine nucleotide-binding protein 4</fullName>
    </alternativeName>
</protein>
<proteinExistence type="evidence at protein level"/>
<gene>
    <name evidence="9 11" type="primary">GBP4</name>
</gene>
<feature type="chain" id="PRO_0000190968" description="Guanylate-binding protein 4">
    <location>
        <begin position="1"/>
        <end position="640"/>
    </location>
</feature>
<feature type="domain" description="GB1/RHD3-type G" evidence="4">
    <location>
        <begin position="50"/>
        <end position="292"/>
    </location>
</feature>
<feature type="region of interest" description="GTPase domain (Globular)" evidence="2">
    <location>
        <begin position="1"/>
        <end position="325"/>
    </location>
</feature>
<feature type="coiled-coil region" evidence="3">
    <location>
        <begin position="499"/>
        <end position="612"/>
    </location>
</feature>
<feature type="binding site" evidence="2">
    <location>
        <begin position="60"/>
        <end position="67"/>
    </location>
    <ligand>
        <name>GTP</name>
        <dbReference type="ChEBI" id="CHEBI:37565"/>
    </ligand>
</feature>
<feature type="binding site" evidence="2">
    <location>
        <begin position="82"/>
        <end position="84"/>
    </location>
    <ligand>
        <name>GTP</name>
        <dbReference type="ChEBI" id="CHEBI:37565"/>
    </ligand>
</feature>
<feature type="binding site" evidence="2">
    <location>
        <begin position="112"/>
        <end position="116"/>
    </location>
    <ligand>
        <name>GTP</name>
        <dbReference type="ChEBI" id="CHEBI:37565"/>
    </ligand>
</feature>
<feature type="sequence variant" id="VAR_028283" description="In dbSNP:rs17130745.">
    <original>K</original>
    <variation>E</variation>
    <location>
        <position position="125"/>
    </location>
</feature>
<feature type="sequence variant" id="VAR_028284" description="In dbSNP:rs1831240.">
    <original>I</original>
    <variation>V</variation>
    <location>
        <position position="379"/>
    </location>
</feature>
<feature type="sequence variant" id="VAR_028285" description="In dbSNP:rs655260.">
    <original>Y</original>
    <variation>N</variation>
    <location>
        <position position="541"/>
    </location>
</feature>
<feature type="sequence variant" id="VAR_033952" description="In dbSNP:rs1142886.">
    <original>M</original>
    <variation>I</variation>
    <location>
        <position position="542"/>
    </location>
</feature>
<feature type="sequence variant" id="VAR_033953" description="In dbSNP:rs1142889.">
    <original>M</original>
    <variation>I</variation>
    <location>
        <position position="545"/>
    </location>
</feature>
<feature type="sequence variant" id="VAR_033954" description="In dbSNP:rs1142888.">
    <original>M</original>
    <variation>L</variation>
    <location>
        <position position="545"/>
    </location>
</feature>
<feature type="sequence variant" id="VAR_033955" description="In dbSNP:rs1142890.">
    <original>E</original>
    <variation>K</variation>
    <location>
        <position position="546"/>
    </location>
</feature>
<feature type="sequence variant" id="VAR_028286" description="In dbSNP:rs608339.">
    <original>L</original>
    <variation>M</variation>
    <location>
        <position position="549"/>
    </location>
</feature>
<feature type="sequence variant" id="VAR_028288" description="In dbSNP:rs561042.">
    <original>E</original>
    <variation>G</variation>
    <location>
        <position position="551"/>
    </location>
</feature>
<feature type="sequence variant" id="VAR_028287" description="In dbSNP:rs561037.">
    <original>E</original>
    <variation>K</variation>
    <location>
        <position position="551"/>
    </location>
</feature>
<feature type="sequence conflict" description="In Ref. 5; AAH70055." evidence="10" ref="5">
    <original>E</original>
    <variation>K</variation>
    <location>
        <position position="298"/>
    </location>
</feature>
<feature type="sequence conflict" description="In Ref. 5; AAH17889." evidence="10" ref="5">
    <original>IEKKKGDFV</original>
    <variation>KKKKKKKKK</variation>
    <location>
        <begin position="402"/>
        <end position="410"/>
    </location>
</feature>
<feature type="sequence conflict" description="In Ref. 4; BAG35327." evidence="10" ref="4">
    <original>A</original>
    <variation>P</variation>
    <location>
        <position position="416"/>
    </location>
</feature>
<feature type="sequence conflict" description="In Ref. 5; AAH70055." evidence="10" ref="5">
    <original>A</original>
    <variation>S</variation>
    <location>
        <position position="502"/>
    </location>
</feature>
<feature type="sequence conflict" description="In Ref. 1; AAL02054 and 3; BAC85144." evidence="10" ref="1 3">
    <original>YM</original>
    <variation>NI</variation>
    <location>
        <begin position="541"/>
        <end position="542"/>
    </location>
</feature>
<feature type="sequence conflict" description="In Ref. 1; AAL02054 and 3; BAC85144." evidence="10" ref="1 3">
    <original>ME</original>
    <variation>LK</variation>
    <location>
        <begin position="545"/>
        <end position="546"/>
    </location>
</feature>
<feature type="sequence conflict" description="In Ref. 1; AAL02054 and 3; BAC85144." evidence="10" ref="1 3">
    <original>LEE</original>
    <variation>MER</variation>
    <location>
        <begin position="549"/>
        <end position="551"/>
    </location>
</feature>
<feature type="sequence conflict" description="In Ref. 4; BAG35327." evidence="10" ref="4">
    <original>K</original>
    <variation>R</variation>
    <location>
        <position position="582"/>
    </location>
</feature>
<comment type="function">
    <text evidence="1">Interferon (IFN)-inducible GTPase that plays important roles in innate immunity against a diverse range of bacterial, viral and protozoan pathogens (By similarity). Negatively regulates the antiviral response by inhibiting activation of IRF7 transcription factor (By similarity).</text>
</comment>
<comment type="catalytic activity">
    <reaction evidence="2">
        <text>GTP + H2O = GDP + phosphate + H(+)</text>
        <dbReference type="Rhea" id="RHEA:19669"/>
        <dbReference type="ChEBI" id="CHEBI:15377"/>
        <dbReference type="ChEBI" id="CHEBI:15378"/>
        <dbReference type="ChEBI" id="CHEBI:37565"/>
        <dbReference type="ChEBI" id="CHEBI:43474"/>
        <dbReference type="ChEBI" id="CHEBI:58189"/>
    </reaction>
</comment>
<comment type="subunit">
    <text evidence="1 6">Heterodimer with other family members, including GBP1, GBP2 and GBP5 (PubMed:21151871). Dimerization regulates subcellular location (PubMed:21151871). Interacts with IRF7; preventing interaction between TRAF6 and IRF7, resulting in impaired TRAF6-mediated IRF7 ubiquitination (By similarity).</text>
</comment>
<comment type="interaction">
    <interactant intactId="EBI-20840650">
        <id>Q96PP9</id>
    </interactant>
    <interactant intactId="EBI-2869161">
        <id>P32455</id>
        <label>GBP1</label>
    </interactant>
    <organismsDiffer>false</organismsDiffer>
    <experiments>2</experiments>
</comment>
<comment type="interaction">
    <interactant intactId="EBI-20840650">
        <id>Q96PP9</id>
    </interactant>
    <interactant intactId="EBI-714388">
        <id>P32456</id>
        <label>GBP2</label>
    </interactant>
    <organismsDiffer>false</organismsDiffer>
    <experiments>2</experiments>
</comment>
<comment type="interaction">
    <interactant intactId="EBI-20840650">
        <id>Q96PP9</id>
    </interactant>
    <interactant intactId="EBI-20840650">
        <id>Q96PP9</id>
        <label>GBP4</label>
    </interactant>
    <organismsDiffer>false</organismsDiffer>
    <experiments>2</experiments>
</comment>
<comment type="interaction">
    <interactant intactId="EBI-20840650">
        <id>Q96PP9</id>
    </interactant>
    <interactant intactId="EBI-749932">
        <id>Q96PP8</id>
        <label>GBP5</label>
    </interactant>
    <organismsDiffer>false</organismsDiffer>
    <experiments>2</experiments>
</comment>
<comment type="subcellular location">
    <subcellularLocation>
        <location evidence="6">Golgi apparatus membrane</location>
    </subcellularLocation>
    <subcellularLocation>
        <location evidence="5">Cytoplasm</location>
    </subcellularLocation>
    <subcellularLocation>
        <location evidence="5">Nucleus</location>
    </subcellularLocation>
    <subcellularLocation>
        <location evidence="6">Cytoplasm</location>
        <location evidence="6">Perinuclear region</location>
    </subcellularLocation>
    <text evidence="6">Heterodimers with GBP1, GBP2 and GBP5 localize in the compartment of the prenylated GBPs: with GBP1 in a vesicle-like compartment, with GBP2, around the nucleus and with GBP5, at the Golgi apparatus.</text>
</comment>
<comment type="induction">
    <text evidence="5">By IFNG during macrophage activation.</text>
</comment>
<comment type="PTM">
    <text evidence="7 8">(Microbial infection) Ubiquitinated by S.flexneri IpaH9.8, leading to its degradation by the proteasome, thereby preventing its ability to promote host defense against bacterial infection.</text>
</comment>
<comment type="similarity">
    <text evidence="4">Belongs to the TRAFAC class dynamin-like GTPase superfamily. GB1/RHD3 GTPase family. GB1 subfamily.</text>
</comment>
<comment type="sequence caution" evidence="10">
    <conflict type="erroneous initiation">
        <sequence resource="EMBL-CDS" id="BAC85144"/>
    </conflict>
    <text>Extended N-terminus.</text>
</comment>
<evidence type="ECO:0000250" key="1">
    <source>
        <dbReference type="UniProtKB" id="A4UUI3"/>
    </source>
</evidence>
<evidence type="ECO:0000250" key="2">
    <source>
        <dbReference type="UniProtKB" id="P32455"/>
    </source>
</evidence>
<evidence type="ECO:0000255" key="3"/>
<evidence type="ECO:0000255" key="4">
    <source>
        <dbReference type="PROSITE-ProRule" id="PRU01052"/>
    </source>
</evidence>
<evidence type="ECO:0000269" key="5">
    <source>
    </source>
</evidence>
<evidence type="ECO:0000269" key="6">
    <source>
    </source>
</evidence>
<evidence type="ECO:0000269" key="7">
    <source>
    </source>
</evidence>
<evidence type="ECO:0000269" key="8">
    <source>
    </source>
</evidence>
<evidence type="ECO:0000303" key="9">
    <source ref="1"/>
</evidence>
<evidence type="ECO:0000305" key="10"/>
<evidence type="ECO:0000312" key="11">
    <source>
        <dbReference type="HGNC" id="HGNC:20480"/>
    </source>
</evidence>
<keyword id="KW-0175">Coiled coil</keyword>
<keyword id="KW-0963">Cytoplasm</keyword>
<keyword id="KW-0333">Golgi apparatus</keyword>
<keyword id="KW-0342">GTP-binding</keyword>
<keyword id="KW-0378">Hydrolase</keyword>
<keyword id="KW-0391">Immunity</keyword>
<keyword id="KW-0399">Innate immunity</keyword>
<keyword id="KW-0472">Membrane</keyword>
<keyword id="KW-0547">Nucleotide-binding</keyword>
<keyword id="KW-0539">Nucleus</keyword>
<keyword id="KW-1267">Proteomics identification</keyword>
<keyword id="KW-1185">Reference proteome</keyword>
<keyword id="KW-0832">Ubl conjugation</keyword>
<dbReference type="EC" id="3.6.5.-" evidence="2"/>
<dbReference type="EMBL" id="AF288814">
    <property type="protein sequence ID" value="AAL02054.1"/>
    <property type="molecule type" value="mRNA"/>
</dbReference>
<dbReference type="EMBL" id="AL832576">
    <property type="protein sequence ID" value="CAD89936.1"/>
    <property type="molecule type" value="mRNA"/>
</dbReference>
<dbReference type="EMBL" id="AK131094">
    <property type="protein sequence ID" value="BAC85144.1"/>
    <property type="status" value="ALT_INIT"/>
    <property type="molecule type" value="mRNA"/>
</dbReference>
<dbReference type="EMBL" id="AK312417">
    <property type="protein sequence ID" value="BAG35327.1"/>
    <property type="molecule type" value="mRNA"/>
</dbReference>
<dbReference type="EMBL" id="BC017889">
    <property type="protein sequence ID" value="AAH17889.1"/>
    <property type="molecule type" value="mRNA"/>
</dbReference>
<dbReference type="EMBL" id="BC070055">
    <property type="protein sequence ID" value="AAH70055.1"/>
    <property type="molecule type" value="mRNA"/>
</dbReference>
<dbReference type="CCDS" id="CCDS721.1"/>
<dbReference type="RefSeq" id="NP_443173.2">
    <property type="nucleotide sequence ID" value="NM_052941.4"/>
</dbReference>
<dbReference type="SMR" id="Q96PP9"/>
<dbReference type="BioGRID" id="125430">
    <property type="interactions" value="5"/>
</dbReference>
<dbReference type="FunCoup" id="Q96PP9">
    <property type="interactions" value="418"/>
</dbReference>
<dbReference type="IntAct" id="Q96PP9">
    <property type="interactions" value="4"/>
</dbReference>
<dbReference type="STRING" id="9606.ENSP00000359490"/>
<dbReference type="GlyGen" id="Q96PP9">
    <property type="glycosylation" value="4 sites, 1 O-linked glycan (3 sites)"/>
</dbReference>
<dbReference type="iPTMnet" id="Q96PP9"/>
<dbReference type="PhosphoSitePlus" id="Q96PP9"/>
<dbReference type="BioMuta" id="GBP4"/>
<dbReference type="DMDM" id="116242487"/>
<dbReference type="jPOST" id="Q96PP9"/>
<dbReference type="MassIVE" id="Q96PP9"/>
<dbReference type="PaxDb" id="9606-ENSP00000359490"/>
<dbReference type="PeptideAtlas" id="Q96PP9"/>
<dbReference type="ProteomicsDB" id="77726"/>
<dbReference type="Pumba" id="Q96PP9"/>
<dbReference type="Antibodypedia" id="33614">
    <property type="antibodies" value="210 antibodies from 29 providers"/>
</dbReference>
<dbReference type="DNASU" id="115361"/>
<dbReference type="Ensembl" id="ENST00000355754.7">
    <property type="protein sequence ID" value="ENSP00000359490.5"/>
    <property type="gene ID" value="ENSG00000162654.9"/>
</dbReference>
<dbReference type="GeneID" id="115361"/>
<dbReference type="KEGG" id="hsa:115361"/>
<dbReference type="MANE-Select" id="ENST00000355754.7">
    <property type="protein sequence ID" value="ENSP00000359490.5"/>
    <property type="RefSeq nucleotide sequence ID" value="NM_052941.5"/>
    <property type="RefSeq protein sequence ID" value="NP_443173.2"/>
</dbReference>
<dbReference type="UCSC" id="uc001dnb.4">
    <property type="organism name" value="human"/>
</dbReference>
<dbReference type="AGR" id="HGNC:20480"/>
<dbReference type="CTD" id="115361"/>
<dbReference type="DisGeNET" id="115361"/>
<dbReference type="GeneCards" id="GBP4"/>
<dbReference type="HGNC" id="HGNC:20480">
    <property type="gene designation" value="GBP4"/>
</dbReference>
<dbReference type="HPA" id="ENSG00000162654">
    <property type="expression patterns" value="Low tissue specificity"/>
</dbReference>
<dbReference type="MIM" id="612466">
    <property type="type" value="gene"/>
</dbReference>
<dbReference type="neXtProt" id="NX_Q96PP9"/>
<dbReference type="OpenTargets" id="ENSG00000162654"/>
<dbReference type="PharmGKB" id="PA134959399"/>
<dbReference type="VEuPathDB" id="HostDB:ENSG00000162654"/>
<dbReference type="eggNOG" id="KOG2037">
    <property type="taxonomic scope" value="Eukaryota"/>
</dbReference>
<dbReference type="GeneTree" id="ENSGT00940000164661"/>
<dbReference type="HOGENOM" id="CLU_018608_2_1_1"/>
<dbReference type="InParanoid" id="Q96PP9"/>
<dbReference type="OMA" id="MQSDNFC"/>
<dbReference type="OrthoDB" id="2135133at2759"/>
<dbReference type="PAN-GO" id="Q96PP9">
    <property type="GO annotations" value="6 GO annotations based on evolutionary models"/>
</dbReference>
<dbReference type="PhylomeDB" id="Q96PP9"/>
<dbReference type="TreeFam" id="TF331602"/>
<dbReference type="PathwayCommons" id="Q96PP9"/>
<dbReference type="Reactome" id="R-HSA-877300">
    <property type="pathway name" value="Interferon gamma signaling"/>
</dbReference>
<dbReference type="SignaLink" id="Q96PP9"/>
<dbReference type="BioGRID-ORCS" id="115361">
    <property type="hits" value="10 hits in 1153 CRISPR screens"/>
</dbReference>
<dbReference type="ChiTaRS" id="GBP4">
    <property type="organism name" value="human"/>
</dbReference>
<dbReference type="GenomeRNAi" id="115361"/>
<dbReference type="Pharos" id="Q96PP9">
    <property type="development level" value="Tbio"/>
</dbReference>
<dbReference type="PRO" id="PR:Q96PP9"/>
<dbReference type="Proteomes" id="UP000005640">
    <property type="component" value="Chromosome 1"/>
</dbReference>
<dbReference type="RNAct" id="Q96PP9">
    <property type="molecule type" value="protein"/>
</dbReference>
<dbReference type="Bgee" id="ENSG00000162654">
    <property type="expression patterns" value="Expressed in leukocyte and 148 other cell types or tissues"/>
</dbReference>
<dbReference type="GO" id="GO:0031410">
    <property type="term" value="C:cytoplasmic vesicle"/>
    <property type="evidence" value="ECO:0000318"/>
    <property type="project" value="GO_Central"/>
</dbReference>
<dbReference type="GO" id="GO:0005829">
    <property type="term" value="C:cytosol"/>
    <property type="evidence" value="ECO:0000314"/>
    <property type="project" value="UniProtKB"/>
</dbReference>
<dbReference type="GO" id="GO:0005794">
    <property type="term" value="C:Golgi apparatus"/>
    <property type="evidence" value="ECO:0000314"/>
    <property type="project" value="HPA"/>
</dbReference>
<dbReference type="GO" id="GO:0000139">
    <property type="term" value="C:Golgi membrane"/>
    <property type="evidence" value="ECO:0007669"/>
    <property type="project" value="UniProtKB-SubCell"/>
</dbReference>
<dbReference type="GO" id="GO:0005634">
    <property type="term" value="C:nucleus"/>
    <property type="evidence" value="ECO:0000314"/>
    <property type="project" value="UniProtKB"/>
</dbReference>
<dbReference type="GO" id="GO:0048471">
    <property type="term" value="C:perinuclear region of cytoplasm"/>
    <property type="evidence" value="ECO:0000314"/>
    <property type="project" value="UniProtKB"/>
</dbReference>
<dbReference type="GO" id="GO:0005886">
    <property type="term" value="C:plasma membrane"/>
    <property type="evidence" value="ECO:0000314"/>
    <property type="project" value="HPA"/>
</dbReference>
<dbReference type="GO" id="GO:0005525">
    <property type="term" value="F:GTP binding"/>
    <property type="evidence" value="ECO:0000318"/>
    <property type="project" value="GO_Central"/>
</dbReference>
<dbReference type="GO" id="GO:0003924">
    <property type="term" value="F:GTPase activity"/>
    <property type="evidence" value="ECO:0000318"/>
    <property type="project" value="GO_Central"/>
</dbReference>
<dbReference type="GO" id="GO:0042802">
    <property type="term" value="F:identical protein binding"/>
    <property type="evidence" value="ECO:0000353"/>
    <property type="project" value="IntAct"/>
</dbReference>
<dbReference type="GO" id="GO:0042803">
    <property type="term" value="F:protein homodimerization activity"/>
    <property type="evidence" value="ECO:0000314"/>
    <property type="project" value="UniProtKB"/>
</dbReference>
<dbReference type="GO" id="GO:0071346">
    <property type="term" value="P:cellular response to type II interferon"/>
    <property type="evidence" value="ECO:0000270"/>
    <property type="project" value="UniProtKB"/>
</dbReference>
<dbReference type="GO" id="GO:0050830">
    <property type="term" value="P:defense response to Gram-positive bacterium"/>
    <property type="evidence" value="ECO:0000318"/>
    <property type="project" value="GO_Central"/>
</dbReference>
<dbReference type="GO" id="GO:0042832">
    <property type="term" value="P:defense response to protozoan"/>
    <property type="evidence" value="ECO:0000318"/>
    <property type="project" value="GO_Central"/>
</dbReference>
<dbReference type="CDD" id="cd01851">
    <property type="entry name" value="GBP"/>
    <property type="match status" value="1"/>
</dbReference>
<dbReference type="CDD" id="cd16269">
    <property type="entry name" value="GBP_C"/>
    <property type="match status" value="1"/>
</dbReference>
<dbReference type="FunFam" id="1.20.1000.10:FF:000001">
    <property type="entry name" value="Guanylate binding protein 1"/>
    <property type="match status" value="1"/>
</dbReference>
<dbReference type="FunFam" id="3.40.50.300:FF:000422">
    <property type="entry name" value="Guanylate-binding protein 1"/>
    <property type="match status" value="1"/>
</dbReference>
<dbReference type="Gene3D" id="1.20.1000.10">
    <property type="entry name" value="Guanylate-binding protein, C-terminal domain"/>
    <property type="match status" value="1"/>
</dbReference>
<dbReference type="Gene3D" id="3.40.50.300">
    <property type="entry name" value="P-loop containing nucleotide triphosphate hydrolases"/>
    <property type="match status" value="1"/>
</dbReference>
<dbReference type="InterPro" id="IPR030386">
    <property type="entry name" value="G_GB1_RHD3_dom"/>
</dbReference>
<dbReference type="InterPro" id="IPR037684">
    <property type="entry name" value="GBP_C"/>
</dbReference>
<dbReference type="InterPro" id="IPR003191">
    <property type="entry name" value="Guanylate-bd/ATL_C"/>
</dbReference>
<dbReference type="InterPro" id="IPR036543">
    <property type="entry name" value="Guanylate-bd_C_sf"/>
</dbReference>
<dbReference type="InterPro" id="IPR015894">
    <property type="entry name" value="Guanylate-bd_N"/>
</dbReference>
<dbReference type="InterPro" id="IPR027417">
    <property type="entry name" value="P-loop_NTPase"/>
</dbReference>
<dbReference type="PANTHER" id="PTHR10751">
    <property type="entry name" value="GUANYLATE BINDING PROTEIN"/>
    <property type="match status" value="1"/>
</dbReference>
<dbReference type="Pfam" id="PF02263">
    <property type="entry name" value="GBP"/>
    <property type="match status" value="1"/>
</dbReference>
<dbReference type="Pfam" id="PF02841">
    <property type="entry name" value="GBP_C"/>
    <property type="match status" value="1"/>
</dbReference>
<dbReference type="SUPFAM" id="SSF48340">
    <property type="entry name" value="Interferon-induced guanylate-binding protein 1 (GBP1), C-terminal domain"/>
    <property type="match status" value="1"/>
</dbReference>
<dbReference type="SUPFAM" id="SSF52540">
    <property type="entry name" value="P-loop containing nucleoside triphosphate hydrolases"/>
    <property type="match status" value="1"/>
</dbReference>
<dbReference type="PROSITE" id="PS51715">
    <property type="entry name" value="G_GB1_RHD3"/>
    <property type="match status" value="1"/>
</dbReference>
<reference key="1">
    <citation type="submission" date="2000-07" db="EMBL/GenBank/DDBJ databases">
        <title>Human GBP-4 and -5: new members of the IFN-gamma-inducible guanylate binding protein family.</title>
        <authorList>
            <person name="Avdalovic A."/>
            <person name="Fu H."/>
            <person name="Tsurushita N."/>
        </authorList>
    </citation>
    <scope>NUCLEOTIDE SEQUENCE [MRNA]</scope>
</reference>
<reference key="2">
    <citation type="journal article" date="2007" name="BMC Genomics">
        <title>The full-ORF clone resource of the German cDNA consortium.</title>
        <authorList>
            <person name="Bechtel S."/>
            <person name="Rosenfelder H."/>
            <person name="Duda A."/>
            <person name="Schmidt C.P."/>
            <person name="Ernst U."/>
            <person name="Wellenreuther R."/>
            <person name="Mehrle A."/>
            <person name="Schuster C."/>
            <person name="Bahr A."/>
            <person name="Bloecker H."/>
            <person name="Heubner D."/>
            <person name="Hoerlein A."/>
            <person name="Michel G."/>
            <person name="Wedler H."/>
            <person name="Koehrer K."/>
            <person name="Ottenwaelder B."/>
            <person name="Poustka A."/>
            <person name="Wiemann S."/>
            <person name="Schupp I."/>
        </authorList>
    </citation>
    <scope>NUCLEOTIDE SEQUENCE [LARGE SCALE MRNA]</scope>
    <source>
        <tissue>Spinal cord</tissue>
    </source>
</reference>
<reference key="3">
    <citation type="journal article" date="2003" name="DNA Res.">
        <title>Characterization of long cDNA clones from human adult spleen. II. The complete sequences of 81 cDNA clones.</title>
        <authorList>
            <person name="Jikuya H."/>
            <person name="Takano J."/>
            <person name="Kikuno R."/>
            <person name="Hirosawa M."/>
            <person name="Nagase T."/>
            <person name="Nomura N."/>
            <person name="Ohara O."/>
        </authorList>
    </citation>
    <scope>NUCLEOTIDE SEQUENCE [LARGE SCALE MRNA]</scope>
    <source>
        <tissue>Spleen</tissue>
    </source>
</reference>
<reference key="4">
    <citation type="journal article" date="2004" name="Nat. Genet.">
        <title>Complete sequencing and characterization of 21,243 full-length human cDNAs.</title>
        <authorList>
            <person name="Ota T."/>
            <person name="Suzuki Y."/>
            <person name="Nishikawa T."/>
            <person name="Otsuki T."/>
            <person name="Sugiyama T."/>
            <person name="Irie R."/>
            <person name="Wakamatsu A."/>
            <person name="Hayashi K."/>
            <person name="Sato H."/>
            <person name="Nagai K."/>
            <person name="Kimura K."/>
            <person name="Makita H."/>
            <person name="Sekine M."/>
            <person name="Obayashi M."/>
            <person name="Nishi T."/>
            <person name="Shibahara T."/>
            <person name="Tanaka T."/>
            <person name="Ishii S."/>
            <person name="Yamamoto J."/>
            <person name="Saito K."/>
            <person name="Kawai Y."/>
            <person name="Isono Y."/>
            <person name="Nakamura Y."/>
            <person name="Nagahari K."/>
            <person name="Murakami K."/>
            <person name="Yasuda T."/>
            <person name="Iwayanagi T."/>
            <person name="Wagatsuma M."/>
            <person name="Shiratori A."/>
            <person name="Sudo H."/>
            <person name="Hosoiri T."/>
            <person name="Kaku Y."/>
            <person name="Kodaira H."/>
            <person name="Kondo H."/>
            <person name="Sugawara M."/>
            <person name="Takahashi M."/>
            <person name="Kanda K."/>
            <person name="Yokoi T."/>
            <person name="Furuya T."/>
            <person name="Kikkawa E."/>
            <person name="Omura Y."/>
            <person name="Abe K."/>
            <person name="Kamihara K."/>
            <person name="Katsuta N."/>
            <person name="Sato K."/>
            <person name="Tanikawa M."/>
            <person name="Yamazaki M."/>
            <person name="Ninomiya K."/>
            <person name="Ishibashi T."/>
            <person name="Yamashita H."/>
            <person name="Murakawa K."/>
            <person name="Fujimori K."/>
            <person name="Tanai H."/>
            <person name="Kimata M."/>
            <person name="Watanabe M."/>
            <person name="Hiraoka S."/>
            <person name="Chiba Y."/>
            <person name="Ishida S."/>
            <person name="Ono Y."/>
            <person name="Takiguchi S."/>
            <person name="Watanabe S."/>
            <person name="Yosida M."/>
            <person name="Hotuta T."/>
            <person name="Kusano J."/>
            <person name="Kanehori K."/>
            <person name="Takahashi-Fujii A."/>
            <person name="Hara H."/>
            <person name="Tanase T.-O."/>
            <person name="Nomura Y."/>
            <person name="Togiya S."/>
            <person name="Komai F."/>
            <person name="Hara R."/>
            <person name="Takeuchi K."/>
            <person name="Arita M."/>
            <person name="Imose N."/>
            <person name="Musashino K."/>
            <person name="Yuuki H."/>
            <person name="Oshima A."/>
            <person name="Sasaki N."/>
            <person name="Aotsuka S."/>
            <person name="Yoshikawa Y."/>
            <person name="Matsunawa H."/>
            <person name="Ichihara T."/>
            <person name="Shiohata N."/>
            <person name="Sano S."/>
            <person name="Moriya S."/>
            <person name="Momiyama H."/>
            <person name="Satoh N."/>
            <person name="Takami S."/>
            <person name="Terashima Y."/>
            <person name="Suzuki O."/>
            <person name="Nakagawa S."/>
            <person name="Senoh A."/>
            <person name="Mizoguchi H."/>
            <person name="Goto Y."/>
            <person name="Shimizu F."/>
            <person name="Wakebe H."/>
            <person name="Hishigaki H."/>
            <person name="Watanabe T."/>
            <person name="Sugiyama A."/>
            <person name="Takemoto M."/>
            <person name="Kawakami B."/>
            <person name="Yamazaki M."/>
            <person name="Watanabe K."/>
            <person name="Kumagai A."/>
            <person name="Itakura S."/>
            <person name="Fukuzumi Y."/>
            <person name="Fujimori Y."/>
            <person name="Komiyama M."/>
            <person name="Tashiro H."/>
            <person name="Tanigami A."/>
            <person name="Fujiwara T."/>
            <person name="Ono T."/>
            <person name="Yamada K."/>
            <person name="Fujii Y."/>
            <person name="Ozaki K."/>
            <person name="Hirao M."/>
            <person name="Ohmori Y."/>
            <person name="Kawabata A."/>
            <person name="Hikiji T."/>
            <person name="Kobatake N."/>
            <person name="Inagaki H."/>
            <person name="Ikema Y."/>
            <person name="Okamoto S."/>
            <person name="Okitani R."/>
            <person name="Kawakami T."/>
            <person name="Noguchi S."/>
            <person name="Itoh T."/>
            <person name="Shigeta K."/>
            <person name="Senba T."/>
            <person name="Matsumura K."/>
            <person name="Nakajima Y."/>
            <person name="Mizuno T."/>
            <person name="Morinaga M."/>
            <person name="Sasaki M."/>
            <person name="Togashi T."/>
            <person name="Oyama M."/>
            <person name="Hata H."/>
            <person name="Watanabe M."/>
            <person name="Komatsu T."/>
            <person name="Mizushima-Sugano J."/>
            <person name="Satoh T."/>
            <person name="Shirai Y."/>
            <person name="Takahashi Y."/>
            <person name="Nakagawa K."/>
            <person name="Okumura K."/>
            <person name="Nagase T."/>
            <person name="Nomura N."/>
            <person name="Kikuchi H."/>
            <person name="Masuho Y."/>
            <person name="Yamashita R."/>
            <person name="Nakai K."/>
            <person name="Yada T."/>
            <person name="Nakamura Y."/>
            <person name="Ohara O."/>
            <person name="Isogai T."/>
            <person name="Sugano S."/>
        </authorList>
    </citation>
    <scope>NUCLEOTIDE SEQUENCE [LARGE SCALE MRNA]</scope>
    <source>
        <tissue>Brain</tissue>
    </source>
</reference>
<reference key="5">
    <citation type="journal article" date="2004" name="Genome Res.">
        <title>The status, quality, and expansion of the NIH full-length cDNA project: the Mammalian Gene Collection (MGC).</title>
        <authorList>
            <consortium name="The MGC Project Team"/>
        </authorList>
    </citation>
    <scope>NUCLEOTIDE SEQUENCE [LARGE SCALE MRNA]</scope>
    <source>
        <tissue>Placenta</tissue>
        <tissue>Testis</tissue>
    </source>
</reference>
<reference key="6">
    <citation type="journal article" date="2007" name="J. Interferon Cytokine Res.">
        <title>Unique features of different members of the human guanylate-binding protein family.</title>
        <authorList>
            <person name="Tripal P."/>
            <person name="Bauer M."/>
            <person name="Naschberger E."/>
            <person name="Mortinger T."/>
            <person name="Hohenadl C."/>
            <person name="Cornali E."/>
            <person name="Thurau M."/>
            <person name="Sturzl M."/>
        </authorList>
    </citation>
    <scope>SUBCELLULAR LOCATION</scope>
    <scope>INDUCTION</scope>
</reference>
<reference key="7">
    <citation type="journal article" date="2010" name="PLoS ONE">
        <title>Intracellular trafficking of guanylate-binding proteins is regulated by heterodimerization in a hierarchical manner.</title>
        <authorList>
            <person name="Britzen-Laurent N."/>
            <person name="Bauer M."/>
            <person name="Berton V."/>
            <person name="Fischer N."/>
            <person name="Syguda A."/>
            <person name="Reipschlager S."/>
            <person name="Naschberger E."/>
            <person name="Herrmann C."/>
            <person name="Sturzl M."/>
        </authorList>
    </citation>
    <scope>SUBCELLULAR LOCATION</scope>
    <scope>DIMERIZATION</scope>
</reference>
<reference key="8">
    <citation type="journal article" date="2017" name="Cell Host Microbe">
        <title>GBPs inhibit motility of Shigella flexneri but are targeted for degradation by the bacterial ubiquitin ligase IpaH9.8.</title>
        <authorList>
            <person name="Wandel M.P."/>
            <person name="Pathe C."/>
            <person name="Werner E.I."/>
            <person name="Ellison C.J."/>
            <person name="Boyle K.B."/>
            <person name="von der Malsburg A."/>
            <person name="Rohde J."/>
            <person name="Randow F."/>
        </authorList>
    </citation>
    <scope>UBIQUITINATION (MICROBIAL INFECTION)</scope>
</reference>
<reference key="9">
    <citation type="journal article" date="2017" name="Nature">
        <title>Ubiquitination and degradation of GBPs by a Shigella effector to suppress host defence.</title>
        <authorList>
            <person name="Li P."/>
            <person name="Jiang W."/>
            <person name="Yu Q."/>
            <person name="Liu W."/>
            <person name="Zhou P."/>
            <person name="Li J."/>
            <person name="Xu J."/>
            <person name="Xu B."/>
            <person name="Wang F."/>
            <person name="Shao F."/>
        </authorList>
    </citation>
    <scope>UBIQUITINATION (MICROBIAL INFECTION)</scope>
</reference>
<organism>
    <name type="scientific">Homo sapiens</name>
    <name type="common">Human</name>
    <dbReference type="NCBI Taxonomy" id="9606"/>
    <lineage>
        <taxon>Eukaryota</taxon>
        <taxon>Metazoa</taxon>
        <taxon>Chordata</taxon>
        <taxon>Craniata</taxon>
        <taxon>Vertebrata</taxon>
        <taxon>Euteleostomi</taxon>
        <taxon>Mammalia</taxon>
        <taxon>Eutheria</taxon>
        <taxon>Euarchontoglires</taxon>
        <taxon>Primates</taxon>
        <taxon>Haplorrhini</taxon>
        <taxon>Catarrhini</taxon>
        <taxon>Hominidae</taxon>
        <taxon>Homo</taxon>
    </lineage>
</organism>
<accession>Q96PP9</accession>
<accession>B2R630</accession>
<accession>Q05D63</accession>
<accession>Q6NSL0</accession>
<accession>Q86T99</accession>
<name>GBP4_HUMAN</name>
<sequence length="640" mass="73165">MGERTLHAAVPTPGYPESESIMMAPICLVENQEEQLTVNSKALEILDKISQPVVVVAIVGLYRTGKSYLMNRLAGKRNGFPLGSTVQSETKGIWMWCVPHLSKPNHTLVLLDTEGLGDVEKSNPKNDSWIFALAVLLSSSFVYNSVSTINHQALEQLHYVTELAELIRAKSCPRPDEAEDSSEFASFFPDFIWTVRDFTLELKLDGNPITEDEYLENALKLIPGKNPKIQNSNMPRECIRHFFRKRKCFVFDRPTNDKQYLNHMDEVPEENLERHFLMQSDNFCSYIFTHAKTKTLREGIIVTGKRLGTLVVTYVDAINSGAVPCLENAVTALAQLENPAAVQRAADHYSQQMAQQLRLPTDTLQELLDVHAACEREAIAVFMEHSFKDENHEFQKKLVDTIEKKKGDFVLQNEEASAKYCQAELKRLSEHLTESILRGIFSVPGGHNLYLEEKKQVEWDYKLVPRKGVKANEVLQNFLQSQVVVEESILQSDKALTAGEKAIAAERAMKEAAEKEQELLREKQKEQQQMMEAQERSFQEYMAQMEKKLEEERENLLREHERLLKHKLKVQEEMLKEEFQKKSEQLNKEINQLKEKIESTKNEQLRLLKILDMASNIMIVTLPGASKLLGVGTKYLGSRI</sequence>